<organism>
    <name type="scientific">Francisella tularensis subsp. novicida (strain U112)</name>
    <dbReference type="NCBI Taxonomy" id="401614"/>
    <lineage>
        <taxon>Bacteria</taxon>
        <taxon>Pseudomonadati</taxon>
        <taxon>Pseudomonadota</taxon>
        <taxon>Gammaproteobacteria</taxon>
        <taxon>Thiotrichales</taxon>
        <taxon>Francisellaceae</taxon>
        <taxon>Francisella</taxon>
    </lineage>
</organism>
<comment type="function">
    <text evidence="1">Converts 2C-methyl-D-erythritol 2,4-cyclodiphosphate (ME-2,4cPP) into 1-hydroxy-2-methyl-2-(E)-butenyl 4-diphosphate.</text>
</comment>
<comment type="catalytic activity">
    <reaction evidence="1">
        <text>(2E)-4-hydroxy-3-methylbut-2-enyl diphosphate + oxidized [flavodoxin] + H2O + 2 H(+) = 2-C-methyl-D-erythritol 2,4-cyclic diphosphate + reduced [flavodoxin]</text>
        <dbReference type="Rhea" id="RHEA:43604"/>
        <dbReference type="Rhea" id="RHEA-COMP:10622"/>
        <dbReference type="Rhea" id="RHEA-COMP:10623"/>
        <dbReference type="ChEBI" id="CHEBI:15377"/>
        <dbReference type="ChEBI" id="CHEBI:15378"/>
        <dbReference type="ChEBI" id="CHEBI:57618"/>
        <dbReference type="ChEBI" id="CHEBI:58210"/>
        <dbReference type="ChEBI" id="CHEBI:58483"/>
        <dbReference type="ChEBI" id="CHEBI:128753"/>
        <dbReference type="EC" id="1.17.7.3"/>
    </reaction>
</comment>
<comment type="cofactor">
    <cofactor evidence="1">
        <name>[4Fe-4S] cluster</name>
        <dbReference type="ChEBI" id="CHEBI:49883"/>
    </cofactor>
    <text evidence="1">Binds 1 [4Fe-4S] cluster.</text>
</comment>
<comment type="pathway">
    <text evidence="1">Isoprenoid biosynthesis; isopentenyl diphosphate biosynthesis via DXP pathway; isopentenyl diphosphate from 1-deoxy-D-xylulose 5-phosphate: step 5/6.</text>
</comment>
<comment type="similarity">
    <text evidence="1">Belongs to the IspG family.</text>
</comment>
<gene>
    <name evidence="1" type="primary">ispG</name>
    <name type="ordered locus">FTN_1076</name>
</gene>
<sequence>MGSYMNKTSVVKVGNVLIGGDNPVVVQSMTDTYTADVEKTVKQILALHKAGSEIVRITVNDEPAAAAVPEIVKELANHDCHVPLVGDFHYNGHTLLSKYPECAKALAKYRINPGNVGFGKKKDTQFAEIIKIAIANDKPVRIGVNWGSLDQALLARLIDENNAQENPLSLQQIMHKALITSALESAKYAEELGLAKDKIIISCKVSEVQDLIAVYQKLAKECDYALHLGLTEAGMGTKGIVASAVSLGILLQQGIGNTIRVSLTPAPNAPRTEEVRVCREILQNLGMRTFTPSVTSCPGCGRTTSSFFRELTSKVKDHLDEKMHTWKEQYHGVEAMKVAVMGCVVNGPGESKNADIGISLPGSGESPVAPVFIDGKKAHTLRGDNISEEFIEIVENYVKNRYGKK</sequence>
<accession>A0Q6U8</accession>
<proteinExistence type="inferred from homology"/>
<reference key="1">
    <citation type="journal article" date="2007" name="Genome Biol.">
        <title>Comparison of Francisella tularensis genomes reveals evolutionary events associated with the emergence of human pathogenic strains.</title>
        <authorList>
            <person name="Rohmer L."/>
            <person name="Fong C."/>
            <person name="Abmayr S."/>
            <person name="Wasnick M."/>
            <person name="Larson Freeman T.J."/>
            <person name="Radey M."/>
            <person name="Guina T."/>
            <person name="Svensson K."/>
            <person name="Hayden H.S."/>
            <person name="Jacobs M."/>
            <person name="Gallagher L.A."/>
            <person name="Manoil C."/>
            <person name="Ernst R.K."/>
            <person name="Drees B."/>
            <person name="Buckley D."/>
            <person name="Haugen E."/>
            <person name="Bovee D."/>
            <person name="Zhou Y."/>
            <person name="Chang J."/>
            <person name="Levy R."/>
            <person name="Lim R."/>
            <person name="Gillett W."/>
            <person name="Guenthener D."/>
            <person name="Kang A."/>
            <person name="Shaffer S.A."/>
            <person name="Taylor G."/>
            <person name="Chen J."/>
            <person name="Gallis B."/>
            <person name="D'Argenio D.A."/>
            <person name="Forsman M."/>
            <person name="Olson M.V."/>
            <person name="Goodlett D.R."/>
            <person name="Kaul R."/>
            <person name="Miller S.I."/>
            <person name="Brittnacher M.J."/>
        </authorList>
    </citation>
    <scope>NUCLEOTIDE SEQUENCE [LARGE SCALE GENOMIC DNA]</scope>
    <source>
        <strain>U112</strain>
    </source>
</reference>
<name>ISPG_FRATN</name>
<evidence type="ECO:0000255" key="1">
    <source>
        <dbReference type="HAMAP-Rule" id="MF_00159"/>
    </source>
</evidence>
<feature type="chain" id="PRO_1000011467" description="4-hydroxy-3-methylbut-2-en-1-yl diphosphate synthase (flavodoxin)">
    <location>
        <begin position="1"/>
        <end position="405"/>
    </location>
</feature>
<feature type="binding site" evidence="1">
    <location>
        <position position="297"/>
    </location>
    <ligand>
        <name>[4Fe-4S] cluster</name>
        <dbReference type="ChEBI" id="CHEBI:49883"/>
    </ligand>
</feature>
<feature type="binding site" evidence="1">
    <location>
        <position position="300"/>
    </location>
    <ligand>
        <name>[4Fe-4S] cluster</name>
        <dbReference type="ChEBI" id="CHEBI:49883"/>
    </ligand>
</feature>
<feature type="binding site" evidence="1">
    <location>
        <position position="343"/>
    </location>
    <ligand>
        <name>[4Fe-4S] cluster</name>
        <dbReference type="ChEBI" id="CHEBI:49883"/>
    </ligand>
</feature>
<feature type="binding site" evidence="1">
    <location>
        <position position="350"/>
    </location>
    <ligand>
        <name>[4Fe-4S] cluster</name>
        <dbReference type="ChEBI" id="CHEBI:49883"/>
    </ligand>
</feature>
<dbReference type="EC" id="1.17.7.3" evidence="1"/>
<dbReference type="EMBL" id="CP000439">
    <property type="protein sequence ID" value="ABK89963.1"/>
    <property type="molecule type" value="Genomic_DNA"/>
</dbReference>
<dbReference type="SMR" id="A0Q6U8"/>
<dbReference type="KEGG" id="ftn:FTN_1076"/>
<dbReference type="BioCyc" id="FTUL401614:G1G75-1119-MONOMER"/>
<dbReference type="UniPathway" id="UPA00056">
    <property type="reaction ID" value="UER00096"/>
</dbReference>
<dbReference type="Proteomes" id="UP000000762">
    <property type="component" value="Chromosome"/>
</dbReference>
<dbReference type="GO" id="GO:0051539">
    <property type="term" value="F:4 iron, 4 sulfur cluster binding"/>
    <property type="evidence" value="ECO:0007669"/>
    <property type="project" value="UniProtKB-UniRule"/>
</dbReference>
<dbReference type="GO" id="GO:0046429">
    <property type="term" value="F:4-hydroxy-3-methylbut-2-en-1-yl diphosphate synthase activity (ferredoxin)"/>
    <property type="evidence" value="ECO:0007669"/>
    <property type="project" value="UniProtKB-UniRule"/>
</dbReference>
<dbReference type="GO" id="GO:0141197">
    <property type="term" value="F:4-hydroxy-3-methylbut-2-enyl-diphosphate synthase activity (flavodoxin)"/>
    <property type="evidence" value="ECO:0007669"/>
    <property type="project" value="UniProtKB-EC"/>
</dbReference>
<dbReference type="GO" id="GO:0005506">
    <property type="term" value="F:iron ion binding"/>
    <property type="evidence" value="ECO:0007669"/>
    <property type="project" value="InterPro"/>
</dbReference>
<dbReference type="GO" id="GO:0019288">
    <property type="term" value="P:isopentenyl diphosphate biosynthetic process, methylerythritol 4-phosphate pathway"/>
    <property type="evidence" value="ECO:0007669"/>
    <property type="project" value="UniProtKB-UniRule"/>
</dbReference>
<dbReference type="GO" id="GO:0016114">
    <property type="term" value="P:terpenoid biosynthetic process"/>
    <property type="evidence" value="ECO:0007669"/>
    <property type="project" value="InterPro"/>
</dbReference>
<dbReference type="FunFam" id="3.20.20.20:FF:000001">
    <property type="entry name" value="4-hydroxy-3-methylbut-2-en-1-yl diphosphate synthase (flavodoxin)"/>
    <property type="match status" value="1"/>
</dbReference>
<dbReference type="FunFam" id="3.30.413.10:FF:000012">
    <property type="entry name" value="4-hydroxy-3-methylbut-2-en-1-yl diphosphate synthase (flavodoxin)"/>
    <property type="match status" value="1"/>
</dbReference>
<dbReference type="Gene3D" id="3.20.20.20">
    <property type="entry name" value="Dihydropteroate synthase-like"/>
    <property type="match status" value="1"/>
</dbReference>
<dbReference type="Gene3D" id="3.30.413.10">
    <property type="entry name" value="Sulfite Reductase Hemoprotein, domain 1"/>
    <property type="match status" value="1"/>
</dbReference>
<dbReference type="HAMAP" id="MF_00159">
    <property type="entry name" value="IspG"/>
    <property type="match status" value="1"/>
</dbReference>
<dbReference type="InterPro" id="IPR011005">
    <property type="entry name" value="Dihydropteroate_synth-like_sf"/>
</dbReference>
<dbReference type="InterPro" id="IPR016425">
    <property type="entry name" value="IspG_bac"/>
</dbReference>
<dbReference type="InterPro" id="IPR004588">
    <property type="entry name" value="IspG_bac-typ"/>
</dbReference>
<dbReference type="InterPro" id="IPR045854">
    <property type="entry name" value="NO2/SO3_Rdtase_4Fe4S_sf"/>
</dbReference>
<dbReference type="NCBIfam" id="TIGR00612">
    <property type="entry name" value="ispG_gcpE"/>
    <property type="match status" value="1"/>
</dbReference>
<dbReference type="NCBIfam" id="NF001540">
    <property type="entry name" value="PRK00366.1"/>
    <property type="match status" value="1"/>
</dbReference>
<dbReference type="PANTHER" id="PTHR30454">
    <property type="entry name" value="4-HYDROXY-3-METHYLBUT-2-EN-1-YL DIPHOSPHATE SYNTHASE"/>
    <property type="match status" value="1"/>
</dbReference>
<dbReference type="PANTHER" id="PTHR30454:SF0">
    <property type="entry name" value="4-HYDROXY-3-METHYLBUT-2-EN-1-YL DIPHOSPHATE SYNTHASE (FERREDOXIN), CHLOROPLASTIC"/>
    <property type="match status" value="1"/>
</dbReference>
<dbReference type="Pfam" id="PF04551">
    <property type="entry name" value="GcpE"/>
    <property type="match status" value="1"/>
</dbReference>
<dbReference type="PIRSF" id="PIRSF004640">
    <property type="entry name" value="IspG"/>
    <property type="match status" value="1"/>
</dbReference>
<dbReference type="SUPFAM" id="SSF56014">
    <property type="entry name" value="Nitrite and sulphite reductase 4Fe-4S domain-like"/>
    <property type="match status" value="1"/>
</dbReference>
<protein>
    <recommendedName>
        <fullName evidence="1">4-hydroxy-3-methylbut-2-en-1-yl diphosphate synthase (flavodoxin)</fullName>
        <ecNumber evidence="1">1.17.7.3</ecNumber>
    </recommendedName>
    <alternativeName>
        <fullName evidence="1">1-hydroxy-2-methyl-2-(E)-butenyl 4-diphosphate synthase</fullName>
    </alternativeName>
</protein>
<keyword id="KW-0004">4Fe-4S</keyword>
<keyword id="KW-0408">Iron</keyword>
<keyword id="KW-0411">Iron-sulfur</keyword>
<keyword id="KW-0414">Isoprene biosynthesis</keyword>
<keyword id="KW-0479">Metal-binding</keyword>
<keyword id="KW-0560">Oxidoreductase</keyword>